<organism>
    <name type="scientific">Photobacterium profundum (strain SS9)</name>
    <dbReference type="NCBI Taxonomy" id="298386"/>
    <lineage>
        <taxon>Bacteria</taxon>
        <taxon>Pseudomonadati</taxon>
        <taxon>Pseudomonadota</taxon>
        <taxon>Gammaproteobacteria</taxon>
        <taxon>Vibrionales</taxon>
        <taxon>Vibrionaceae</taxon>
        <taxon>Photobacterium</taxon>
    </lineage>
</organism>
<sequence length="85" mass="9649">MAKGQSLQDPFLNALRRERIPVSIYLVNGIKLQGQIESFDQFVILLKNTVNQMVYKHAISTVVPARPVNHHHASDRPATLEKTEE</sequence>
<gene>
    <name evidence="2" type="primary">hfq</name>
    <name type="ordered locus">PBPRA3350</name>
</gene>
<accession>Q9EYZ5</accession>
<name>HFQ_PHOPR</name>
<evidence type="ECO:0000250" key="1"/>
<evidence type="ECO:0000255" key="2">
    <source>
        <dbReference type="HAMAP-Rule" id="MF_00436"/>
    </source>
</evidence>
<evidence type="ECO:0000255" key="3">
    <source>
        <dbReference type="PROSITE-ProRule" id="PRU01346"/>
    </source>
</evidence>
<evidence type="ECO:0000256" key="4">
    <source>
        <dbReference type="SAM" id="MobiDB-lite"/>
    </source>
</evidence>
<evidence type="ECO:0000305" key="5"/>
<feature type="initiator methionine" description="Removed" evidence="1">
    <location>
        <position position="1"/>
    </location>
</feature>
<feature type="chain" id="PRO_0000095659" description="RNA-binding protein Hfq">
    <location>
        <begin position="2"/>
        <end position="85"/>
    </location>
</feature>
<feature type="domain" description="Sm" evidence="3">
    <location>
        <begin position="9"/>
        <end position="68"/>
    </location>
</feature>
<feature type="region of interest" description="Disordered" evidence="4">
    <location>
        <begin position="66"/>
        <end position="85"/>
    </location>
</feature>
<feature type="compositionally biased region" description="Basic and acidic residues" evidence="4">
    <location>
        <begin position="72"/>
        <end position="85"/>
    </location>
</feature>
<feature type="sequence conflict" description="In Ref. 2." evidence="5" ref="2">
    <original>VP</original>
    <variation>IR</variation>
    <location>
        <begin position="63"/>
        <end position="64"/>
    </location>
</feature>
<comment type="function">
    <text evidence="2">RNA chaperone that binds small regulatory RNA (sRNAs) and mRNAs to facilitate mRNA translational regulation in response to envelope stress, environmental stress and changes in metabolite concentrations. Also binds with high specificity to tRNAs.</text>
</comment>
<comment type="subunit">
    <text evidence="2">Homohexamer.</text>
</comment>
<comment type="similarity">
    <text evidence="2">Belongs to the Hfq family.</text>
</comment>
<dbReference type="EMBL" id="CR378673">
    <property type="protein sequence ID" value="CAG21648.1"/>
    <property type="molecule type" value="Genomic_DNA"/>
</dbReference>
<dbReference type="EMBL" id="AF307979">
    <property type="protein sequence ID" value="AAG34558.1"/>
    <property type="molecule type" value="Genomic_DNA"/>
</dbReference>
<dbReference type="RefSeq" id="WP_011219894.1">
    <property type="nucleotide sequence ID" value="NC_006370.1"/>
</dbReference>
<dbReference type="SMR" id="Q9EYZ5"/>
<dbReference type="STRING" id="298386.PBPRA3350"/>
<dbReference type="KEGG" id="ppr:PBPRA3350"/>
<dbReference type="eggNOG" id="COG1923">
    <property type="taxonomic scope" value="Bacteria"/>
</dbReference>
<dbReference type="HOGENOM" id="CLU_113688_2_2_6"/>
<dbReference type="Proteomes" id="UP000000593">
    <property type="component" value="Chromosome 1"/>
</dbReference>
<dbReference type="GO" id="GO:0005829">
    <property type="term" value="C:cytosol"/>
    <property type="evidence" value="ECO:0007669"/>
    <property type="project" value="TreeGrafter"/>
</dbReference>
<dbReference type="GO" id="GO:0003723">
    <property type="term" value="F:RNA binding"/>
    <property type="evidence" value="ECO:0007669"/>
    <property type="project" value="UniProtKB-UniRule"/>
</dbReference>
<dbReference type="GO" id="GO:0006355">
    <property type="term" value="P:regulation of DNA-templated transcription"/>
    <property type="evidence" value="ECO:0007669"/>
    <property type="project" value="InterPro"/>
</dbReference>
<dbReference type="GO" id="GO:0043487">
    <property type="term" value="P:regulation of RNA stability"/>
    <property type="evidence" value="ECO:0007669"/>
    <property type="project" value="TreeGrafter"/>
</dbReference>
<dbReference type="GO" id="GO:0045974">
    <property type="term" value="P:regulation of translation, ncRNA-mediated"/>
    <property type="evidence" value="ECO:0007669"/>
    <property type="project" value="TreeGrafter"/>
</dbReference>
<dbReference type="CDD" id="cd01716">
    <property type="entry name" value="Hfq"/>
    <property type="match status" value="1"/>
</dbReference>
<dbReference type="FunFam" id="2.30.30.100:FF:000001">
    <property type="entry name" value="RNA-binding protein Hfq"/>
    <property type="match status" value="1"/>
</dbReference>
<dbReference type="Gene3D" id="2.30.30.100">
    <property type="match status" value="1"/>
</dbReference>
<dbReference type="HAMAP" id="MF_00436">
    <property type="entry name" value="Hfq"/>
    <property type="match status" value="1"/>
</dbReference>
<dbReference type="InterPro" id="IPR005001">
    <property type="entry name" value="Hfq"/>
</dbReference>
<dbReference type="InterPro" id="IPR010920">
    <property type="entry name" value="LSM_dom_sf"/>
</dbReference>
<dbReference type="InterPro" id="IPR047575">
    <property type="entry name" value="Sm"/>
</dbReference>
<dbReference type="NCBIfam" id="TIGR02383">
    <property type="entry name" value="Hfq"/>
    <property type="match status" value="1"/>
</dbReference>
<dbReference type="NCBIfam" id="NF001602">
    <property type="entry name" value="PRK00395.1"/>
    <property type="match status" value="1"/>
</dbReference>
<dbReference type="PANTHER" id="PTHR34772">
    <property type="entry name" value="RNA-BINDING PROTEIN HFQ"/>
    <property type="match status" value="1"/>
</dbReference>
<dbReference type="PANTHER" id="PTHR34772:SF1">
    <property type="entry name" value="RNA-BINDING PROTEIN HFQ"/>
    <property type="match status" value="1"/>
</dbReference>
<dbReference type="Pfam" id="PF17209">
    <property type="entry name" value="Hfq"/>
    <property type="match status" value="1"/>
</dbReference>
<dbReference type="SUPFAM" id="SSF50182">
    <property type="entry name" value="Sm-like ribonucleoproteins"/>
    <property type="match status" value="1"/>
</dbReference>
<dbReference type="PROSITE" id="PS52002">
    <property type="entry name" value="SM"/>
    <property type="match status" value="1"/>
</dbReference>
<protein>
    <recommendedName>
        <fullName evidence="2">RNA-binding protein Hfq</fullName>
    </recommendedName>
</protein>
<proteinExistence type="inferred from homology"/>
<keyword id="KW-1185">Reference proteome</keyword>
<keyword id="KW-0694">RNA-binding</keyword>
<keyword id="KW-0346">Stress response</keyword>
<reference key="1">
    <citation type="journal article" date="2005" name="Science">
        <title>Life at depth: Photobacterium profundum genome sequence and expression analysis.</title>
        <authorList>
            <person name="Vezzi A."/>
            <person name="Campanaro S."/>
            <person name="D'Angelo M."/>
            <person name="Simonato F."/>
            <person name="Vitulo N."/>
            <person name="Lauro F.M."/>
            <person name="Cestaro A."/>
            <person name="Malacrida G."/>
            <person name="Simionati B."/>
            <person name="Cannata N."/>
            <person name="Romualdi C."/>
            <person name="Bartlett D.H."/>
            <person name="Valle G."/>
        </authorList>
    </citation>
    <scope>NUCLEOTIDE SEQUENCE [LARGE SCALE GENOMIC DNA]</scope>
    <source>
        <strain>ATCC BAA-1253 / SS9</strain>
    </source>
</reference>
<reference key="2">
    <citation type="submission" date="2000-09" db="EMBL/GenBank/DDBJ databases">
        <title>An RNA arbitrarily primed PCR survey of genes regulated at low and high pressure by ToxR in the marine bacterium Photobacterium profundum SS9.</title>
        <authorList>
            <person name="Bidle K.A."/>
            <person name="Bartlett D.H."/>
        </authorList>
    </citation>
    <scope>NUCLEOTIDE SEQUENCE [GENOMIC DNA] OF 1-64</scope>
</reference>